<keyword id="KW-0002">3D-structure</keyword>
<keyword id="KW-0007">Acetylation</keyword>
<keyword id="KW-0025">Alternative splicing</keyword>
<keyword id="KW-0053">Apoptosis</keyword>
<keyword id="KW-0225">Disease variant</keyword>
<keyword id="KW-0378">Hydrolase</keyword>
<keyword id="KW-0991">Intellectual disability</keyword>
<keyword id="KW-0451">Lissencephaly</keyword>
<keyword id="KW-0597">Phosphoprotein</keyword>
<keyword id="KW-0645">Protease</keyword>
<keyword id="KW-1267">Proteomics identification</keyword>
<keyword id="KW-1185">Reference proteome</keyword>
<keyword id="KW-0788">Thiol protease</keyword>
<keyword id="KW-0865">Zymogen</keyword>
<reference key="1">
    <citation type="journal article" date="1994" name="Cell">
        <title>Ich-1, an Ice/ced-3-related gene, encodes both positive and negative regulators of programmed cell death.</title>
        <authorList>
            <person name="Wang L."/>
            <person name="Miura M."/>
            <person name="Bergeron L."/>
            <person name="Zhu H."/>
            <person name="Yuan J."/>
        </authorList>
    </citation>
    <scope>NUCLEOTIDE SEQUENCE [MRNA] (ISOFORM 2)</scope>
    <scope>NUCLEOTIDE SEQUENCE [MRNA] OF 14-452 (ISOFORM 1)</scope>
    <scope>FUNCTION</scope>
    <source>
        <tissue>Fetal brain</tissue>
    </source>
</reference>
<reference key="2">
    <citation type="journal article" date="2000" name="Cancer Res.">
        <title>Identification of a caspase-2 isoform that behaves as an endogenous inhibitor of the caspase cascade.</title>
        <authorList>
            <person name="Droin N."/>
            <person name="Beauchemin M."/>
            <person name="Solary E."/>
            <person name="Bertrand R."/>
        </authorList>
    </citation>
    <scope>NUCLEOTIDE SEQUENCE [MRNA] (ISOFORM 3)</scope>
    <scope>NUCLEOTIDE SEQUENCE [MRNA] OF 32-108 (ISOFORMS 1/2)</scope>
    <scope>ALTERNATIVE SPLICING</scope>
    <scope>FUNCTION</scope>
</reference>
<reference key="3">
    <citation type="submission" date="2004-06" db="EMBL/GenBank/DDBJ databases">
        <title>Cloning of human full open reading frames in Gateway(TM) system entry vector (pDONR201).</title>
        <authorList>
            <person name="Halleck A."/>
            <person name="Ebert L."/>
            <person name="Mkoundinya M."/>
            <person name="Schick M."/>
            <person name="Eisenstein S."/>
            <person name="Neubert P."/>
            <person name="Kstrang K."/>
            <person name="Schatten R."/>
            <person name="Shen B."/>
            <person name="Henze S."/>
            <person name="Mar W."/>
            <person name="Korn B."/>
            <person name="Zuo D."/>
            <person name="Hu Y."/>
            <person name="LaBaer J."/>
        </authorList>
    </citation>
    <scope>NUCLEOTIDE SEQUENCE [LARGE SCALE MRNA] (ISOFORM 2)</scope>
</reference>
<reference key="4">
    <citation type="journal article" date="2004" name="Nat. Genet.">
        <title>Complete sequencing and characterization of 21,243 full-length human cDNAs.</title>
        <authorList>
            <person name="Ota T."/>
            <person name="Suzuki Y."/>
            <person name="Nishikawa T."/>
            <person name="Otsuki T."/>
            <person name="Sugiyama T."/>
            <person name="Irie R."/>
            <person name="Wakamatsu A."/>
            <person name="Hayashi K."/>
            <person name="Sato H."/>
            <person name="Nagai K."/>
            <person name="Kimura K."/>
            <person name="Makita H."/>
            <person name="Sekine M."/>
            <person name="Obayashi M."/>
            <person name="Nishi T."/>
            <person name="Shibahara T."/>
            <person name="Tanaka T."/>
            <person name="Ishii S."/>
            <person name="Yamamoto J."/>
            <person name="Saito K."/>
            <person name="Kawai Y."/>
            <person name="Isono Y."/>
            <person name="Nakamura Y."/>
            <person name="Nagahari K."/>
            <person name="Murakami K."/>
            <person name="Yasuda T."/>
            <person name="Iwayanagi T."/>
            <person name="Wagatsuma M."/>
            <person name="Shiratori A."/>
            <person name="Sudo H."/>
            <person name="Hosoiri T."/>
            <person name="Kaku Y."/>
            <person name="Kodaira H."/>
            <person name="Kondo H."/>
            <person name="Sugawara M."/>
            <person name="Takahashi M."/>
            <person name="Kanda K."/>
            <person name="Yokoi T."/>
            <person name="Furuya T."/>
            <person name="Kikkawa E."/>
            <person name="Omura Y."/>
            <person name="Abe K."/>
            <person name="Kamihara K."/>
            <person name="Katsuta N."/>
            <person name="Sato K."/>
            <person name="Tanikawa M."/>
            <person name="Yamazaki M."/>
            <person name="Ninomiya K."/>
            <person name="Ishibashi T."/>
            <person name="Yamashita H."/>
            <person name="Murakawa K."/>
            <person name="Fujimori K."/>
            <person name="Tanai H."/>
            <person name="Kimata M."/>
            <person name="Watanabe M."/>
            <person name="Hiraoka S."/>
            <person name="Chiba Y."/>
            <person name="Ishida S."/>
            <person name="Ono Y."/>
            <person name="Takiguchi S."/>
            <person name="Watanabe S."/>
            <person name="Yosida M."/>
            <person name="Hotuta T."/>
            <person name="Kusano J."/>
            <person name="Kanehori K."/>
            <person name="Takahashi-Fujii A."/>
            <person name="Hara H."/>
            <person name="Tanase T.-O."/>
            <person name="Nomura Y."/>
            <person name="Togiya S."/>
            <person name="Komai F."/>
            <person name="Hara R."/>
            <person name="Takeuchi K."/>
            <person name="Arita M."/>
            <person name="Imose N."/>
            <person name="Musashino K."/>
            <person name="Yuuki H."/>
            <person name="Oshima A."/>
            <person name="Sasaki N."/>
            <person name="Aotsuka S."/>
            <person name="Yoshikawa Y."/>
            <person name="Matsunawa H."/>
            <person name="Ichihara T."/>
            <person name="Shiohata N."/>
            <person name="Sano S."/>
            <person name="Moriya S."/>
            <person name="Momiyama H."/>
            <person name="Satoh N."/>
            <person name="Takami S."/>
            <person name="Terashima Y."/>
            <person name="Suzuki O."/>
            <person name="Nakagawa S."/>
            <person name="Senoh A."/>
            <person name="Mizoguchi H."/>
            <person name="Goto Y."/>
            <person name="Shimizu F."/>
            <person name="Wakebe H."/>
            <person name="Hishigaki H."/>
            <person name="Watanabe T."/>
            <person name="Sugiyama A."/>
            <person name="Takemoto M."/>
            <person name="Kawakami B."/>
            <person name="Yamazaki M."/>
            <person name="Watanabe K."/>
            <person name="Kumagai A."/>
            <person name="Itakura S."/>
            <person name="Fukuzumi Y."/>
            <person name="Fujimori Y."/>
            <person name="Komiyama M."/>
            <person name="Tashiro H."/>
            <person name="Tanigami A."/>
            <person name="Fujiwara T."/>
            <person name="Ono T."/>
            <person name="Yamada K."/>
            <person name="Fujii Y."/>
            <person name="Ozaki K."/>
            <person name="Hirao M."/>
            <person name="Ohmori Y."/>
            <person name="Kawabata A."/>
            <person name="Hikiji T."/>
            <person name="Kobatake N."/>
            <person name="Inagaki H."/>
            <person name="Ikema Y."/>
            <person name="Okamoto S."/>
            <person name="Okitani R."/>
            <person name="Kawakami T."/>
            <person name="Noguchi S."/>
            <person name="Itoh T."/>
            <person name="Shigeta K."/>
            <person name="Senba T."/>
            <person name="Matsumura K."/>
            <person name="Nakajima Y."/>
            <person name="Mizuno T."/>
            <person name="Morinaga M."/>
            <person name="Sasaki M."/>
            <person name="Togashi T."/>
            <person name="Oyama M."/>
            <person name="Hata H."/>
            <person name="Watanabe M."/>
            <person name="Komatsu T."/>
            <person name="Mizushima-Sugano J."/>
            <person name="Satoh T."/>
            <person name="Shirai Y."/>
            <person name="Takahashi Y."/>
            <person name="Nakagawa K."/>
            <person name="Okumura K."/>
            <person name="Nagase T."/>
            <person name="Nomura N."/>
            <person name="Kikuchi H."/>
            <person name="Masuho Y."/>
            <person name="Yamashita R."/>
            <person name="Nakai K."/>
            <person name="Yada T."/>
            <person name="Nakamura Y."/>
            <person name="Ohara O."/>
            <person name="Isogai T."/>
            <person name="Sugano S."/>
        </authorList>
    </citation>
    <scope>NUCLEOTIDE SEQUENCE [LARGE SCALE MRNA] (ISOFORM 1)</scope>
</reference>
<reference key="5">
    <citation type="submission" date="2003-01" db="EMBL/GenBank/DDBJ databases">
        <authorList>
            <consortium name="NIEHS SNPs program"/>
        </authorList>
    </citation>
    <scope>NUCLEOTIDE SEQUENCE [GENOMIC DNA]</scope>
    <scope>VARIANTS LEU-172; ALA-178 AND GLY-441</scope>
</reference>
<reference key="6">
    <citation type="journal article" date="2003" name="Nature">
        <title>The DNA sequence of human chromosome 7.</title>
        <authorList>
            <person name="Hillier L.W."/>
            <person name="Fulton R.S."/>
            <person name="Fulton L.A."/>
            <person name="Graves T.A."/>
            <person name="Pepin K.H."/>
            <person name="Wagner-McPherson C."/>
            <person name="Layman D."/>
            <person name="Maas J."/>
            <person name="Jaeger S."/>
            <person name="Walker R."/>
            <person name="Wylie K."/>
            <person name="Sekhon M."/>
            <person name="Becker M.C."/>
            <person name="O'Laughlin M.D."/>
            <person name="Schaller M.E."/>
            <person name="Fewell G.A."/>
            <person name="Delehaunty K.D."/>
            <person name="Miner T.L."/>
            <person name="Nash W.E."/>
            <person name="Cordes M."/>
            <person name="Du H."/>
            <person name="Sun H."/>
            <person name="Edwards J."/>
            <person name="Bradshaw-Cordum H."/>
            <person name="Ali J."/>
            <person name="Andrews S."/>
            <person name="Isak A."/>
            <person name="Vanbrunt A."/>
            <person name="Nguyen C."/>
            <person name="Du F."/>
            <person name="Lamar B."/>
            <person name="Courtney L."/>
            <person name="Kalicki J."/>
            <person name="Ozersky P."/>
            <person name="Bielicki L."/>
            <person name="Scott K."/>
            <person name="Holmes A."/>
            <person name="Harkins R."/>
            <person name="Harris A."/>
            <person name="Strong C.M."/>
            <person name="Hou S."/>
            <person name="Tomlinson C."/>
            <person name="Dauphin-Kohlberg S."/>
            <person name="Kozlowicz-Reilly A."/>
            <person name="Leonard S."/>
            <person name="Rohlfing T."/>
            <person name="Rock S.M."/>
            <person name="Tin-Wollam A.-M."/>
            <person name="Abbott A."/>
            <person name="Minx P."/>
            <person name="Maupin R."/>
            <person name="Strowmatt C."/>
            <person name="Latreille P."/>
            <person name="Miller N."/>
            <person name="Johnson D."/>
            <person name="Murray J."/>
            <person name="Woessner J.P."/>
            <person name="Wendl M.C."/>
            <person name="Yang S.-P."/>
            <person name="Schultz B.R."/>
            <person name="Wallis J.W."/>
            <person name="Spieth J."/>
            <person name="Bieri T.A."/>
            <person name="Nelson J.O."/>
            <person name="Berkowicz N."/>
            <person name="Wohldmann P.E."/>
            <person name="Cook L.L."/>
            <person name="Hickenbotham M.T."/>
            <person name="Eldred J."/>
            <person name="Williams D."/>
            <person name="Bedell J.A."/>
            <person name="Mardis E.R."/>
            <person name="Clifton S.W."/>
            <person name="Chissoe S.L."/>
            <person name="Marra M.A."/>
            <person name="Raymond C."/>
            <person name="Haugen E."/>
            <person name="Gillett W."/>
            <person name="Zhou Y."/>
            <person name="James R."/>
            <person name="Phelps K."/>
            <person name="Iadanoto S."/>
            <person name="Bubb K."/>
            <person name="Simms E."/>
            <person name="Levy R."/>
            <person name="Clendenning J."/>
            <person name="Kaul R."/>
            <person name="Kent W.J."/>
            <person name="Furey T.S."/>
            <person name="Baertsch R.A."/>
            <person name="Brent M.R."/>
            <person name="Keibler E."/>
            <person name="Flicek P."/>
            <person name="Bork P."/>
            <person name="Suyama M."/>
            <person name="Bailey J.A."/>
            <person name="Portnoy M.E."/>
            <person name="Torrents D."/>
            <person name="Chinwalla A.T."/>
            <person name="Gish W.R."/>
            <person name="Eddy S.R."/>
            <person name="McPherson J.D."/>
            <person name="Olson M.V."/>
            <person name="Eichler E.E."/>
            <person name="Green E.D."/>
            <person name="Waterston R.H."/>
            <person name="Wilson R.K."/>
        </authorList>
    </citation>
    <scope>NUCLEOTIDE SEQUENCE [LARGE SCALE GENOMIC DNA]</scope>
</reference>
<reference key="7">
    <citation type="submission" date="2005-09" db="EMBL/GenBank/DDBJ databases">
        <authorList>
            <person name="Mural R.J."/>
            <person name="Istrail S."/>
            <person name="Sutton G.G."/>
            <person name="Florea L."/>
            <person name="Halpern A.L."/>
            <person name="Mobarry C.M."/>
            <person name="Lippert R."/>
            <person name="Walenz B."/>
            <person name="Shatkay H."/>
            <person name="Dew I."/>
            <person name="Miller J.R."/>
            <person name="Flanigan M.J."/>
            <person name="Edwards N.J."/>
            <person name="Bolanos R."/>
            <person name="Fasulo D."/>
            <person name="Halldorsson B.V."/>
            <person name="Hannenhalli S."/>
            <person name="Turner R."/>
            <person name="Yooseph S."/>
            <person name="Lu F."/>
            <person name="Nusskern D.R."/>
            <person name="Shue B.C."/>
            <person name="Zheng X.H."/>
            <person name="Zhong F."/>
            <person name="Delcher A.L."/>
            <person name="Huson D.H."/>
            <person name="Kravitz S.A."/>
            <person name="Mouchard L."/>
            <person name="Reinert K."/>
            <person name="Remington K.A."/>
            <person name="Clark A.G."/>
            <person name="Waterman M.S."/>
            <person name="Eichler E.E."/>
            <person name="Adams M.D."/>
            <person name="Hunkapiller M.W."/>
            <person name="Myers E.W."/>
            <person name="Venter J.C."/>
        </authorList>
    </citation>
    <scope>NUCLEOTIDE SEQUENCE [LARGE SCALE GENOMIC DNA]</scope>
</reference>
<reference key="8">
    <citation type="journal article" date="2004" name="Genome Res.">
        <title>The status, quality, and expansion of the NIH full-length cDNA project: the Mammalian Gene Collection (MGC).</title>
        <authorList>
            <consortium name="The MGC Project Team"/>
        </authorList>
    </citation>
    <scope>NUCLEOTIDE SEQUENCE [LARGE SCALE MRNA] (ISOFORM 1)</scope>
    <scope>VARIANT LEU-172</scope>
    <source>
        <tissue>Skin</tissue>
    </source>
</reference>
<reference key="9">
    <citation type="submission" date="2003-05" db="EMBL/GenBank/DDBJ databases">
        <title>Cloning of human full-length CDSs in BD Creator(TM) system donor vector.</title>
        <authorList>
            <person name="Kalnine N."/>
            <person name="Chen X."/>
            <person name="Rolfs A."/>
            <person name="Halleck A."/>
            <person name="Hines L."/>
            <person name="Eisenstein S."/>
            <person name="Koundinya M."/>
            <person name="Raphael J."/>
            <person name="Moreira D."/>
            <person name="Kelley T."/>
            <person name="LaBaer J."/>
            <person name="Lin Y."/>
            <person name="Phelan M."/>
            <person name="Farmer A."/>
        </authorList>
    </citation>
    <scope>NUCLEOTIDE SEQUENCE [LARGE SCALE MRNA] OF 18-452 (ISOFORM 1)</scope>
    <scope>VARIANT LEU-172</scope>
</reference>
<reference key="10">
    <citation type="submission" date="2005-03" db="EMBL/GenBank/DDBJ databases">
        <authorList>
            <person name="Totoki Y."/>
            <person name="Toyoda A."/>
            <person name="Takeda T."/>
            <person name="Sakaki Y."/>
            <person name="Tanaka A."/>
            <person name="Yokoyama S."/>
            <person name="Ohara O."/>
            <person name="Nagase T."/>
            <person name="Kikuno R.F."/>
        </authorList>
    </citation>
    <scope>NUCLEOTIDE SEQUENCE [LARGE SCALE MRNA] OF 194-452</scope>
    <source>
        <tissue>Spleen</tissue>
    </source>
</reference>
<reference key="11">
    <citation type="journal article" date="1996" name="Genes Dev.">
        <title>The Caenorhabditis elegans cell-death protein CED-3 is a cysteine protease with substrate specificities similar to those of the human CPP32 protease.</title>
        <authorList>
            <person name="Xue D."/>
            <person name="Shaham S."/>
            <person name="Horvitz H.R."/>
        </authorList>
    </citation>
    <scope>CLEAVAGE SITES</scope>
</reference>
<reference key="12">
    <citation type="journal article" date="1997" name="Cancer Res.">
        <title>CRADD, a novel human apoptotic adaptor molecule for caspase-2, and FasL/tumor necrosis factor receptor-interacting protein RIP.</title>
        <authorList>
            <person name="Ahmad M."/>
            <person name="Srinivasula S.M."/>
            <person name="Wang L."/>
            <person name="Talanian R.V."/>
            <person name="Litwack G."/>
            <person name="Fernandes-Alnemri T."/>
            <person name="Alnemri E.S."/>
        </authorList>
    </citation>
    <scope>INTERACTION WITH CRADD</scope>
</reference>
<reference key="13">
    <citation type="journal article" date="1997" name="Nature">
        <title>RAIDD is a new 'death' adaptor molecule.</title>
        <authorList>
            <person name="Duan H."/>
            <person name="Dixit V.M."/>
        </authorList>
    </citation>
    <scope>INTERACTION WITH CRADD</scope>
    <scope>DOMAIN</scope>
    <scope>MUTAGENESIS OF LEU-57; GLY-95; PHE-99; ASP-100; PHE-102; GLU-104 AND LEU-106</scope>
</reference>
<reference key="14">
    <citation type="journal article" date="1998" name="Proc. Natl. Acad. Sci. U.S.A.">
        <title>ARC, an inhibitor of apoptosis expressed in skeletal muscle and heart that interacts selectively with caspases.</title>
        <authorList>
            <person name="Koseki T."/>
            <person name="Inohara N."/>
            <person name="Chen S."/>
            <person name="Nunez G."/>
        </authorList>
    </citation>
    <scope>INTERACTION WITH NOL3</scope>
</reference>
<reference key="15">
    <citation type="journal article" date="2004" name="Science">
        <title>The PIDDosome, a protein complex implicated in activation of caspase-2 in response to genotoxic stress.</title>
        <authorList>
            <person name="Tinel A."/>
            <person name="Tschopp J."/>
        </authorList>
    </citation>
    <scope>FUNCTION</scope>
    <scope>IDENTIFICATION IN PIDDOSOME COMPLEX</scope>
</reference>
<reference key="16">
    <citation type="journal article" date="2006" name="Oncogene">
        <title>Functional connection between p53 and caspase-2 is essential for apoptosis induced by DNA damage.</title>
        <authorList>
            <person name="Vakifahmetoglu H."/>
            <person name="Olsson M."/>
            <person name="Orrenius S."/>
            <person name="Zhivotovsky B."/>
        </authorList>
    </citation>
    <scope>INTERACTION WITH PIDD1</scope>
</reference>
<reference key="17">
    <citation type="journal article" date="2009" name="Anal. Chem.">
        <title>Lys-N and trypsin cover complementary parts of the phosphoproteome in a refined SCX-based approach.</title>
        <authorList>
            <person name="Gauci S."/>
            <person name="Helbig A.O."/>
            <person name="Slijper M."/>
            <person name="Krijgsveld J."/>
            <person name="Heck A.J."/>
            <person name="Mohammed S."/>
        </authorList>
    </citation>
    <scope>ACETYLATION [LARGE SCALE ANALYSIS] AT ALA-2</scope>
    <scope>CLEAVAGE OF INITIATOR METHIONINE [LARGE SCALE ANALYSIS]</scope>
    <scope>IDENTIFICATION BY MASS SPECTROMETRY [LARGE SCALE ANALYSIS]</scope>
</reference>
<reference key="18">
    <citation type="journal article" date="2011" name="BMC Syst. Biol.">
        <title>Initial characterization of the human central proteome.</title>
        <authorList>
            <person name="Burkard T.R."/>
            <person name="Planyavsky M."/>
            <person name="Kaupe I."/>
            <person name="Breitwieser F.P."/>
            <person name="Buerckstuemmer T."/>
            <person name="Bennett K.L."/>
            <person name="Superti-Furga G."/>
            <person name="Colinge J."/>
        </authorList>
    </citation>
    <scope>IDENTIFICATION BY MASS SPECTROMETRY [LARGE SCALE ANALYSIS]</scope>
</reference>
<reference key="19">
    <citation type="journal article" date="2011" name="Sci. Signal.">
        <title>System-wide temporal characterization of the proteome and phosphoproteome of human embryonic stem cell differentiation.</title>
        <authorList>
            <person name="Rigbolt K.T."/>
            <person name="Prokhorova T.A."/>
            <person name="Akimov V."/>
            <person name="Henningsen J."/>
            <person name="Johansen P.T."/>
            <person name="Kratchmarova I."/>
            <person name="Kassem M."/>
            <person name="Mann M."/>
            <person name="Olsen J.V."/>
            <person name="Blagoev B."/>
        </authorList>
    </citation>
    <scope>PHOSPHORYLATION [LARGE SCALE ANALYSIS] AT SER-340</scope>
    <scope>IDENTIFICATION BY MASS SPECTROMETRY [LARGE SCALE ANALYSIS]</scope>
</reference>
<reference key="20">
    <citation type="journal article" date="2013" name="J. Proteome Res.">
        <title>Toward a comprehensive characterization of a human cancer cell phosphoproteome.</title>
        <authorList>
            <person name="Zhou H."/>
            <person name="Di Palma S."/>
            <person name="Preisinger C."/>
            <person name="Peng M."/>
            <person name="Polat A.N."/>
            <person name="Heck A.J."/>
            <person name="Mohammed S."/>
        </authorList>
    </citation>
    <scope>PHOSPHORYLATION [LARGE SCALE ANALYSIS] AT SER-157</scope>
    <scope>IDENTIFICATION BY MASS SPECTROMETRY [LARGE SCALE ANALYSIS]</scope>
    <source>
        <tissue>Cervix carcinoma</tissue>
        <tissue>Erythroleukemia</tissue>
    </source>
</reference>
<reference key="21">
    <citation type="journal article" date="2003" name="J. Biol. Chem.">
        <title>Crystal structure of caspase-2, apical initiator of the intrinsic apoptotic pathway.</title>
        <authorList>
            <person name="Schweizer A."/>
            <person name="Briand C."/>
            <person name="Grutter M.G."/>
        </authorList>
    </citation>
    <scope>X-RAY CRYSTALLOGRAPHY (1.65 ANGSTROMS) OF 167-452 IN COMPLEX WITH INHIBITOR</scope>
    <scope>SUBUNIT</scope>
    <scope>DISULFIDE BOND</scope>
</reference>
<reference key="22">
    <citation type="journal article" date="2024" name="Eur. J. Hum. Genet.">
        <title>Bi-allelic truncating variants in CASP2 underlie a neurodevelopmental disorder with lissencephaly.</title>
        <authorList>
            <person name="Uctepe E."/>
            <person name="Vona B."/>
            <person name="Esen F.N."/>
            <person name="Sonmez F.M."/>
            <person name="Smol T."/>
            <person name="Tuemer S."/>
            <person name="Mancilar H."/>
            <person name="Geylan Durgun D.E."/>
            <person name="Boute O."/>
            <person name="Moghbeli M."/>
            <person name="Ghayoor Karimiani E."/>
            <person name="Hashemi N."/>
            <person name="Bakhshoodeh B."/>
            <person name="Kim H.G."/>
            <person name="Maroofian R."/>
            <person name="Yesilyurt A."/>
        </authorList>
    </citation>
    <scope>VARIANTS MRT80 44-ARG--THR-452 DEL AND 392-GLN--THR-452 DEL</scope>
    <scope>INVOLVEMENT IN MRT80</scope>
</reference>
<name>CASP2_HUMAN</name>
<feature type="initiator methionine" description="Removed" evidence="22">
    <location>
        <position position="1"/>
    </location>
</feature>
<feature type="propeptide" id="PRO_0000004541">
    <location>
        <begin position="2"/>
        <end position="169"/>
    </location>
</feature>
<feature type="chain" id="PRO_0000004542" description="Caspase-2 subunit p18">
    <location>
        <begin position="170"/>
        <end position="325"/>
    </location>
</feature>
<feature type="propeptide" id="PRO_0000004543">
    <location>
        <begin position="326"/>
        <end position="333"/>
    </location>
</feature>
<feature type="chain" id="PRO_0000004544" description="Caspase-2 subunit p13">
    <location>
        <begin position="334"/>
        <end position="452"/>
    </location>
</feature>
<feature type="chain" id="PRO_0000004545" description="Caspase-2 subunit p12">
    <location>
        <begin position="348"/>
        <end position="452"/>
    </location>
</feature>
<feature type="domain" description="CARD" evidence="2">
    <location>
        <begin position="32"/>
        <end position="121"/>
    </location>
</feature>
<feature type="region of interest" description="Disordered" evidence="3">
    <location>
        <begin position="327"/>
        <end position="354"/>
    </location>
</feature>
<feature type="compositionally biased region" description="Basic and acidic residues" evidence="3">
    <location>
        <begin position="327"/>
        <end position="336"/>
    </location>
</feature>
<feature type="active site" evidence="1">
    <location>
        <position position="277"/>
    </location>
</feature>
<feature type="active site" evidence="1">
    <location>
        <position position="320"/>
    </location>
</feature>
<feature type="modified residue" description="N-acetylalanine" evidence="22">
    <location>
        <position position="2"/>
    </location>
</feature>
<feature type="modified residue" description="Phosphoserine" evidence="24">
    <location>
        <position position="157"/>
    </location>
</feature>
<feature type="modified residue" description="Phosphoserine" evidence="23">
    <location>
        <position position="340"/>
    </location>
</feature>
<feature type="splice variant" id="VSP_000801" description="In isoform 2." evidence="18 19">
    <location>
        <begin position="1"/>
        <end position="31"/>
    </location>
</feature>
<feature type="splice variant" id="VSP_046280" description="In isoform 3." evidence="17">
    <location>
        <begin position="1"/>
        <end position="17"/>
    </location>
</feature>
<feature type="splice variant" id="VSP_046281" description="In isoform 3." evidence="17">
    <original>RE</original>
    <variation>HS</variation>
    <location>
        <begin position="107"/>
        <end position="108"/>
    </location>
</feature>
<feature type="splice variant" id="VSP_046282" description="In isoform 3." evidence="17">
    <location>
        <begin position="109"/>
        <end position="452"/>
    </location>
</feature>
<feature type="splice variant" id="VSP_000802" description="In isoform 2." evidence="18 19">
    <original>DETDRGVDQQDGKNHAGSPGCEESDAGKEKLPKMRLPTRSDMICGYACLKGTAAMRNTKRGSWYIEALAQVFSERACDMHVADMLVKVNALIKDREGYAPGTEFHRCKEMSEYCSTLCRHLYLFPGHPPT</original>
    <variation>GGAIGSLGHLLLFTAATASLAL</variation>
    <location>
        <begin position="323"/>
        <end position="452"/>
    </location>
</feature>
<feature type="sequence variant" id="VAR_089198" description="In MRT80; likely pathogenic." evidence="9">
    <location>
        <begin position="44"/>
        <end position="452"/>
    </location>
</feature>
<feature type="sequence variant" id="VAR_055621" description="In dbSNP:rs762263774.">
    <original>A</original>
    <variation>G</variation>
    <location>
        <position position="105"/>
    </location>
</feature>
<feature type="sequence variant" id="VAR_016334" description="In dbSNP:rs4647297." evidence="7 15 16">
    <original>V</original>
    <variation>L</variation>
    <location>
        <position position="172"/>
    </location>
</feature>
<feature type="sequence variant" id="VAR_016335" description="In dbSNP:rs4647298." evidence="15">
    <original>P</original>
    <variation>A</variation>
    <location>
        <position position="178"/>
    </location>
</feature>
<feature type="sequence variant" id="VAR_089199" description="In MRT80; likely pathogenic." evidence="9">
    <location>
        <begin position="392"/>
        <end position="452"/>
    </location>
</feature>
<feature type="sequence variant" id="VAR_016336" description="In dbSNP:rs4647338." evidence="15">
    <original>R</original>
    <variation>G</variation>
    <location>
        <position position="441"/>
    </location>
</feature>
<feature type="mutagenesis site" description="Loss of interaction with CRADD." evidence="12">
    <original>L</original>
    <variation>F</variation>
    <location>
        <position position="57"/>
    </location>
</feature>
<feature type="mutagenesis site" description="Loss of interaction with CRADD." evidence="12">
    <original>G</original>
    <variation>R</variation>
    <location>
        <position position="95"/>
    </location>
</feature>
<feature type="mutagenesis site" description="Loss of interaction with CRADD." evidence="12">
    <original>F</original>
    <variation>A</variation>
    <location>
        <position position="99"/>
    </location>
</feature>
<feature type="mutagenesis site" description="No effect on interaction with CRADD. Loss of interaction with CRADD; when associated A-104." evidence="12">
    <original>D</original>
    <variation>A</variation>
    <location>
        <position position="100"/>
    </location>
</feature>
<feature type="mutagenesis site" description="Loss of interaction with CRADD." evidence="12">
    <original>F</original>
    <variation>A</variation>
    <location>
        <position position="102"/>
    </location>
</feature>
<feature type="mutagenesis site" description="No effect on interaction with CRADD. Loss of interaction with CRADD; when associated A-100." evidence="12">
    <original>E</original>
    <variation>A</variation>
    <location>
        <position position="104"/>
    </location>
</feature>
<feature type="mutagenesis site" description="Loss of interaction with CRADD." evidence="12">
    <original>L</original>
    <variation>A</variation>
    <location>
        <position position="106"/>
    </location>
</feature>
<feature type="mutagenesis site" description="Loss of function.">
    <original>C</original>
    <variation>S</variation>
    <location>
        <position position="320"/>
    </location>
</feature>
<feature type="mutagenesis site" description="Loss of function.">
    <original>A</original>
    <variation>T</variation>
    <location>
        <position position="369"/>
    </location>
</feature>
<feature type="sequence conflict" description="In Ref. 10; BAD92877." evidence="20" ref="10">
    <original>QNKPKMFFIQACRG</original>
    <variation>EEVTSLSILSAFVT</variation>
    <location>
        <begin position="309"/>
        <end position="322"/>
    </location>
</feature>
<feature type="helix" evidence="28">
    <location>
        <begin position="150"/>
        <end position="157"/>
    </location>
</feature>
<feature type="helix" evidence="25">
    <location>
        <begin position="181"/>
        <end position="187"/>
    </location>
</feature>
<feature type="helix" evidence="25">
    <location>
        <begin position="188"/>
        <end position="190"/>
    </location>
</feature>
<feature type="strand" evidence="25">
    <location>
        <begin position="197"/>
        <end position="206"/>
    </location>
</feature>
<feature type="strand" evidence="25">
    <location>
        <begin position="212"/>
        <end position="214"/>
    </location>
</feature>
<feature type="helix" evidence="25">
    <location>
        <begin position="222"/>
        <end position="235"/>
    </location>
</feature>
<feature type="strand" evidence="25">
    <location>
        <begin position="238"/>
        <end position="245"/>
    </location>
</feature>
<feature type="helix" evidence="25">
    <location>
        <begin position="248"/>
        <end position="259"/>
    </location>
</feature>
<feature type="helix" evidence="25">
    <location>
        <begin position="262"/>
        <end position="265"/>
    </location>
</feature>
<feature type="strand" evidence="25">
    <location>
        <begin position="267"/>
        <end position="276"/>
    </location>
</feature>
<feature type="strand" evidence="25">
    <location>
        <begin position="282"/>
        <end position="284"/>
    </location>
</feature>
<feature type="strand" evidence="25">
    <location>
        <begin position="290"/>
        <end position="292"/>
    </location>
</feature>
<feature type="helix" evidence="25">
    <location>
        <begin position="293"/>
        <end position="299"/>
    </location>
</feature>
<feature type="turn" evidence="25">
    <location>
        <begin position="302"/>
        <end position="304"/>
    </location>
</feature>
<feature type="helix" evidence="25">
    <location>
        <begin position="306"/>
        <end position="308"/>
    </location>
</feature>
<feature type="strand" evidence="25">
    <location>
        <begin position="313"/>
        <end position="319"/>
    </location>
</feature>
<feature type="strand" evidence="25">
    <location>
        <begin position="321"/>
        <end position="324"/>
    </location>
</feature>
<feature type="strand" evidence="25">
    <location>
        <begin position="363"/>
        <end position="370"/>
    </location>
</feature>
<feature type="strand" evidence="26">
    <location>
        <begin position="377"/>
        <end position="379"/>
    </location>
</feature>
<feature type="turn" evidence="25">
    <location>
        <begin position="380"/>
        <end position="382"/>
    </location>
</feature>
<feature type="helix" evidence="25">
    <location>
        <begin position="385"/>
        <end position="397"/>
    </location>
</feature>
<feature type="turn" evidence="25">
    <location>
        <begin position="398"/>
        <end position="400"/>
    </location>
</feature>
<feature type="helix" evidence="25">
    <location>
        <begin position="403"/>
        <end position="415"/>
    </location>
</feature>
<feature type="turn" evidence="25">
    <location>
        <begin position="425"/>
        <end position="428"/>
    </location>
</feature>
<feature type="strand" evidence="25">
    <location>
        <begin position="434"/>
        <end position="437"/>
    </location>
</feature>
<feature type="strand" evidence="27">
    <location>
        <begin position="440"/>
        <end position="442"/>
    </location>
</feature>
<organism>
    <name type="scientific">Homo sapiens</name>
    <name type="common">Human</name>
    <dbReference type="NCBI Taxonomy" id="9606"/>
    <lineage>
        <taxon>Eukaryota</taxon>
        <taxon>Metazoa</taxon>
        <taxon>Chordata</taxon>
        <taxon>Craniata</taxon>
        <taxon>Vertebrata</taxon>
        <taxon>Euteleostomi</taxon>
        <taxon>Mammalia</taxon>
        <taxon>Eutheria</taxon>
        <taxon>Euarchontoglires</taxon>
        <taxon>Primates</taxon>
        <taxon>Haplorrhini</taxon>
        <taxon>Catarrhini</taxon>
        <taxon>Hominidae</taxon>
        <taxon>Homo</taxon>
    </lineage>
</organism>
<proteinExistence type="evidence at protein level"/>
<accession>P42575</accession>
<accession>A8K5F9</accession>
<accession>D3DXD6</accession>
<accession>E9PDN0</accession>
<accession>P42576</accession>
<accession>Q59F21</accession>
<accession>Q7KZL6</accession>
<accession>Q86UJ3</accession>
<accession>Q9BUP7</accession>
<accession>Q9BZK9</accession>
<accession>Q9BZL0</accession>
<sequence length="452" mass="50685">MAAPSAGSWSTFQHKELMAADRGRRILGVCGMHPHHQETLKKNRVVLAKQLLLSELLEHLLEKDIITLEMRELIQAKVGSFSQNVELLNLLPKRGPQAFDAFCEALRETKQGHLEDMLLTTLSGLQHVLPPLSCDYDLSLPFPVCESCPLYKKLRLSTDTVEHSLDNKDGPVCLQVKPCTPEFYQTHFQLAYRLQSRPRGLALVLSNVHFTGEKELEFRSGGDVDHSTLVTLFKLLGYDVHVLCDQTAQEMQEKLQNFAQLPAHRVTDSCIVALLSHGVEGAIYGVDGKLLQLQEVFQLFDNANCPSLQNKPKMFFIQACRGDETDRGVDQQDGKNHAGSPGCEESDAGKEKLPKMRLPTRSDMICGYACLKGTAAMRNTKRGSWYIEALAQVFSERACDMHVADMLVKVNALIKDREGYAPGTEFHRCKEMSEYCSTLCRHLYLFPGHPPT</sequence>
<protein>
    <recommendedName>
        <fullName>Caspase-2</fullName>
        <shortName>CASP-2</shortName>
        <ecNumber>3.4.22.55</ecNumber>
    </recommendedName>
    <alternativeName>
        <fullName>Neural precursor cell expressed developmentally down-regulated protein 2</fullName>
        <shortName>NEDD-2</shortName>
    </alternativeName>
    <alternativeName>
        <fullName evidence="21">Protease ICH-1</fullName>
    </alternativeName>
    <component>
        <recommendedName>
            <fullName>Caspase-2 subunit p18</fullName>
        </recommendedName>
    </component>
    <component>
        <recommendedName>
            <fullName>Caspase-2 subunit p13</fullName>
        </recommendedName>
    </component>
    <component>
        <recommendedName>
            <fullName>Caspase-2 subunit p12</fullName>
        </recommendedName>
    </component>
</protein>
<gene>
    <name type="primary">CASP2</name>
    <name type="synonym">ICH1</name>
    <name type="synonym">NEDD2</name>
</gene>
<comment type="function">
    <text evidence="4 6 10">Is a regulator of the cascade of caspases responsible for apoptosis execution (PubMed:11156409, PubMed:15073321, PubMed:8087842). Might function by either activating some proteins required for cell death or inactivating proteins necessary for cell survival (PubMed:15073321). Associates with PIDD1 and CRADD to form the PIDDosome, a complex that activates CASP2 and triggers apoptosis in response to genotoxic stress (PubMed:15073321).</text>
</comment>
<comment type="function">
    <molecule>Isoform 1</molecule>
    <text evidence="10">Acts as a positive regulator of apoptosis.</text>
</comment>
<comment type="function">
    <molecule>Isoform 2</molecule>
    <text evidence="10">Acts as a negative regulator of apoptosis.</text>
</comment>
<comment type="function">
    <molecule>Isoform 3</molecule>
    <text evidence="4">May function as an endogenous apoptosis inhibitor that antagonizes caspase activation and cell death.</text>
</comment>
<comment type="catalytic activity">
    <reaction>
        <text>Strict requirement for an Asp residue at P1, with 316-Asp being essential for proteolytic activity and has a preferred cleavage sequence of Val-Asp-Val-Ala-Asp-|-.</text>
        <dbReference type="EC" id="3.4.22.55"/>
    </reaction>
</comment>
<comment type="subunit">
    <text evidence="5 6 8 12 13 14">Heterotetramer that consists of two anti-parallel arranged heterodimers, each one formed by a p18 subunit and a p12 subunit (PubMed:12920126). Forms a complex named the PIDDosome with PIDD1 and CRADD (PubMed:15073321, PubMed:16652156, PubMed:8985253, PubMed:9044836). Interacts with NOL3 (via CARD domain); inhibits CASP2 activity in a phosphorylation-dependent manner (PubMed:9560245).</text>
</comment>
<comment type="interaction">
    <interactant intactId="EBI-520342">
        <id>P42575</id>
    </interactant>
    <interactant intactId="EBI-2949658">
        <id>O95429</id>
        <label>BAG4</label>
    </interactant>
    <organismsDiffer>false</organismsDiffer>
    <experiments>3</experiments>
</comment>
<comment type="interaction">
    <interactant intactId="EBI-520342">
        <id>P42575</id>
    </interactant>
    <interactant intactId="EBI-520342">
        <id>P42575</id>
        <label>CASP2</label>
    </interactant>
    <organismsDiffer>false</organismsDiffer>
    <experiments>11</experiments>
</comment>
<comment type="interaction">
    <interactant intactId="EBI-520342">
        <id>P42575</id>
    </interactant>
    <interactant intactId="EBI-520357">
        <id>P42575-1</id>
        <label>CASP2</label>
    </interactant>
    <organismsDiffer>false</organismsDiffer>
    <experiments>2</experiments>
</comment>
<comment type="interaction">
    <interactant intactId="EBI-520342">
        <id>P42575</id>
    </interactant>
    <interactant intactId="EBI-520375">
        <id>P78560</id>
        <label>CRADD</label>
    </interactant>
    <organismsDiffer>false</organismsDiffer>
    <experiments>31</experiments>
</comment>
<comment type="interaction">
    <interactant intactId="EBI-520342">
        <id>P42575</id>
    </interactant>
    <interactant intactId="EBI-1053424">
        <id>O43741</id>
        <label>PRKAB2</label>
    </interactant>
    <organismsDiffer>false</organismsDiffer>
    <experiments>3</experiments>
</comment>
<comment type="alternative products">
    <event type="alternative splicing"/>
    <isoform>
        <id>P42575-1</id>
        <name>1</name>
        <name>ICH-1L</name>
        <sequence type="displayed"/>
    </isoform>
    <isoform>
        <id>P42575-2</id>
        <name>2</name>
        <name>ICH-1S</name>
        <sequence type="described" ref="VSP_000801 VSP_000802"/>
    </isoform>
    <isoform>
        <id>P42575-3</id>
        <name>3</name>
        <name>Casp-2L-Pro</name>
        <sequence type="described" ref="VSP_046280 VSP_046281 VSP_046282"/>
    </isoform>
    <text>Isoforms differ in the N- and C-termini.</text>
</comment>
<comment type="tissue specificity">
    <text>Expressed at higher levels in the embryonic lung, liver and kidney than in the heart and brain. In adults, higher level expression is seen in the placenta, lung, kidney, and pancreas than in the heart, brain, liver and skeletal muscle.</text>
</comment>
<comment type="domain">
    <text evidence="12">The CARD domain mediates a direct interaction with CRADD.</text>
</comment>
<comment type="PTM">
    <text evidence="11">The mature protease can process its own propeptide, but not that of other caspases.</text>
</comment>
<comment type="disease" evidence="9">
    <disease id="DI-06813">
        <name>Intellectual developmental disorder, autosomal recessive 80, with variant lissencephaly</name>
        <acronym>MRT80</acronym>
        <description>An autosomal recessive disorder characterized by global developmental delay, mildly to moderately impaired intellectual development, attention deficit-hyperactivity disorder, hypotonia, seizure, poor social skills, and autistic traits. Brain imaging shows fronto-temporal lissencephaly and pachygyria.</description>
        <dbReference type="MIM" id="620653"/>
    </disease>
    <text>The disease is caused by variants affecting the gene represented in this entry.</text>
</comment>
<comment type="similarity">
    <text evidence="20">Belongs to the peptidase C14A family.</text>
</comment>
<comment type="sequence caution" evidence="20">
    <conflict type="erroneous initiation">
        <sequence resource="EMBL-CDS" id="AAA58959"/>
    </conflict>
</comment>
<comment type="sequence caution" evidence="20">
    <conflict type="erroneous initiation">
        <sequence resource="EMBL-CDS" id="AAO25653"/>
    </conflict>
</comment>
<comment type="sequence caution" evidence="20">
    <conflict type="erroneous initiation">
        <sequence resource="EMBL-CDS" id="AAP22346"/>
    </conflict>
</comment>
<comment type="sequence caution" evidence="20">
    <conflict type="erroneous initiation">
        <sequence resource="EMBL-CDS" id="AAP22349"/>
    </conflict>
</comment>
<comment type="sequence caution" evidence="20">
    <conflict type="erroneous initiation">
        <sequence resource="EMBL-CDS" id="BAD92877"/>
    </conflict>
</comment>
<evidence type="ECO:0000250" key="1"/>
<evidence type="ECO:0000255" key="2">
    <source>
        <dbReference type="PROSITE-ProRule" id="PRU00046"/>
    </source>
</evidence>
<evidence type="ECO:0000256" key="3">
    <source>
        <dbReference type="SAM" id="MobiDB-lite"/>
    </source>
</evidence>
<evidence type="ECO:0000269" key="4">
    <source>
    </source>
</evidence>
<evidence type="ECO:0000269" key="5">
    <source>
    </source>
</evidence>
<evidence type="ECO:0000269" key="6">
    <source>
    </source>
</evidence>
<evidence type="ECO:0000269" key="7">
    <source>
    </source>
</evidence>
<evidence type="ECO:0000269" key="8">
    <source>
    </source>
</evidence>
<evidence type="ECO:0000269" key="9">
    <source>
    </source>
</evidence>
<evidence type="ECO:0000269" key="10">
    <source>
    </source>
</evidence>
<evidence type="ECO:0000269" key="11">
    <source>
    </source>
</evidence>
<evidence type="ECO:0000269" key="12">
    <source>
    </source>
</evidence>
<evidence type="ECO:0000269" key="13">
    <source>
    </source>
</evidence>
<evidence type="ECO:0000269" key="14">
    <source>
    </source>
</evidence>
<evidence type="ECO:0000269" key="15">
    <source ref="5"/>
</evidence>
<evidence type="ECO:0000269" key="16">
    <source ref="9"/>
</evidence>
<evidence type="ECO:0000303" key="17">
    <source>
    </source>
</evidence>
<evidence type="ECO:0000303" key="18">
    <source>
    </source>
</evidence>
<evidence type="ECO:0000303" key="19">
    <source ref="3"/>
</evidence>
<evidence type="ECO:0000305" key="20"/>
<evidence type="ECO:0000305" key="21">
    <source>
    </source>
</evidence>
<evidence type="ECO:0007744" key="22">
    <source>
    </source>
</evidence>
<evidence type="ECO:0007744" key="23">
    <source>
    </source>
</evidence>
<evidence type="ECO:0007744" key="24">
    <source>
    </source>
</evidence>
<evidence type="ECO:0007829" key="25">
    <source>
        <dbReference type="PDB" id="1PYO"/>
    </source>
</evidence>
<evidence type="ECO:0007829" key="26">
    <source>
        <dbReference type="PDB" id="3R5J"/>
    </source>
</evidence>
<evidence type="ECO:0007829" key="27">
    <source>
        <dbReference type="PDB" id="3R7S"/>
    </source>
</evidence>
<evidence type="ECO:0007829" key="28">
    <source>
        <dbReference type="PDB" id="6S9K"/>
    </source>
</evidence>
<dbReference type="EC" id="3.4.22.55"/>
<dbReference type="EMBL" id="U13021">
    <property type="protein sequence ID" value="AAA58959.1"/>
    <property type="status" value="ALT_INIT"/>
    <property type="molecule type" value="mRNA"/>
</dbReference>
<dbReference type="EMBL" id="U13022">
    <property type="protein sequence ID" value="AAA58960.1"/>
    <property type="molecule type" value="mRNA"/>
</dbReference>
<dbReference type="EMBL" id="AF314174">
    <property type="protein sequence ID" value="AAK00299.1"/>
    <property type="molecule type" value="mRNA"/>
</dbReference>
<dbReference type="EMBL" id="AF314175">
    <property type="protein sequence ID" value="AAK00300.1"/>
    <property type="molecule type" value="mRNA"/>
</dbReference>
<dbReference type="EMBL" id="CR541748">
    <property type="protein sequence ID" value="CAG46548.1"/>
    <property type="molecule type" value="mRNA"/>
</dbReference>
<dbReference type="EMBL" id="AK291274">
    <property type="protein sequence ID" value="BAF83963.1"/>
    <property type="molecule type" value="mRNA"/>
</dbReference>
<dbReference type="EMBL" id="AY219042">
    <property type="protein sequence ID" value="AAO25653.1"/>
    <property type="status" value="ALT_INIT"/>
    <property type="molecule type" value="Genomic_DNA"/>
</dbReference>
<dbReference type="EMBL" id="AC073342">
    <property type="protein sequence ID" value="AAP22346.1"/>
    <property type="status" value="ALT_INIT"/>
    <property type="molecule type" value="Genomic_DNA"/>
</dbReference>
<dbReference type="EMBL" id="AC073342">
    <property type="protein sequence ID" value="AAP22347.1"/>
    <property type="molecule type" value="Genomic_DNA"/>
</dbReference>
<dbReference type="EMBL" id="AC073342">
    <property type="protein sequence ID" value="AAP22348.1"/>
    <property type="molecule type" value="Genomic_DNA"/>
</dbReference>
<dbReference type="EMBL" id="AC073342">
    <property type="protein sequence ID" value="AAP22349.1"/>
    <property type="status" value="ALT_INIT"/>
    <property type="molecule type" value="Genomic_DNA"/>
</dbReference>
<dbReference type="EMBL" id="CH471198">
    <property type="protein sequence ID" value="EAW51863.1"/>
    <property type="molecule type" value="Genomic_DNA"/>
</dbReference>
<dbReference type="EMBL" id="CH471198">
    <property type="protein sequence ID" value="EAW51867.1"/>
    <property type="molecule type" value="Genomic_DNA"/>
</dbReference>
<dbReference type="EMBL" id="CH471198">
    <property type="protein sequence ID" value="EAW51870.1"/>
    <property type="molecule type" value="Genomic_DNA"/>
</dbReference>
<dbReference type="EMBL" id="BC002427">
    <property type="protein sequence ID" value="AAH02427.2"/>
    <property type="molecule type" value="mRNA"/>
</dbReference>
<dbReference type="EMBL" id="BT007240">
    <property type="protein sequence ID" value="AAP35904.1"/>
    <property type="molecule type" value="mRNA"/>
</dbReference>
<dbReference type="EMBL" id="AB209640">
    <property type="protein sequence ID" value="BAD92877.1"/>
    <property type="status" value="ALT_INIT"/>
    <property type="molecule type" value="mRNA"/>
</dbReference>
<dbReference type="CCDS" id="CCDS5879.1">
    <molecule id="P42575-1"/>
</dbReference>
<dbReference type="PIR" id="A54821">
    <property type="entry name" value="A54821"/>
</dbReference>
<dbReference type="RefSeq" id="NP_001215.1">
    <property type="nucleotide sequence ID" value="NM_001224.4"/>
</dbReference>
<dbReference type="RefSeq" id="NP_116764.2">
    <molecule id="P42575-1"/>
    <property type="nucleotide sequence ID" value="NM_032982.3"/>
</dbReference>
<dbReference type="RefSeq" id="NP_116765.2">
    <property type="nucleotide sequence ID" value="NM_032983.3"/>
</dbReference>
<dbReference type="PDB" id="1PYO">
    <property type="method" value="X-ray"/>
    <property type="resolution" value="1.65 A"/>
    <property type="chains" value="A/C=167-333, B/D=348-452"/>
</dbReference>
<dbReference type="PDB" id="2P2C">
    <property type="method" value="X-ray"/>
    <property type="resolution" value="3.24 A"/>
    <property type="chains" value="A/C/E/G/I/K=167-333, B/D/F/H/J/L=348-452"/>
</dbReference>
<dbReference type="PDB" id="3R5J">
    <property type="method" value="X-ray"/>
    <property type="resolution" value="1.77 A"/>
    <property type="chains" value="A/C=175-333, B/D=349-452"/>
</dbReference>
<dbReference type="PDB" id="3R6G">
    <property type="method" value="X-ray"/>
    <property type="resolution" value="2.07 A"/>
    <property type="chains" value="A/C=175-333, B/D=349-452"/>
</dbReference>
<dbReference type="PDB" id="3R6L">
    <property type="method" value="X-ray"/>
    <property type="resolution" value="1.90 A"/>
    <property type="chains" value="A/C=175-333, B/D=349-452"/>
</dbReference>
<dbReference type="PDB" id="3R7B">
    <property type="method" value="X-ray"/>
    <property type="resolution" value="1.80 A"/>
    <property type="chains" value="A/C=175-333, B/D=349-452"/>
</dbReference>
<dbReference type="PDB" id="3R7N">
    <property type="method" value="X-ray"/>
    <property type="resolution" value="2.33 A"/>
    <property type="chains" value="A/C=175-333, B/D=349-452"/>
</dbReference>
<dbReference type="PDB" id="3R7S">
    <property type="method" value="X-ray"/>
    <property type="resolution" value="2.25 A"/>
    <property type="chains" value="A/C=175-333, B/D=349-452"/>
</dbReference>
<dbReference type="PDB" id="3RJM">
    <property type="method" value="X-ray"/>
    <property type="resolution" value="2.55 A"/>
    <property type="chains" value="A/C=167-333, B/D=348-452"/>
</dbReference>
<dbReference type="PDB" id="6GKF">
    <property type="method" value="X-ray"/>
    <property type="resolution" value="2.60 A"/>
    <property type="chains" value="I/J/K/L/M/N/O/P=136-143"/>
</dbReference>
<dbReference type="PDB" id="6GKG">
    <property type="method" value="X-ray"/>
    <property type="resolution" value="2.85 A"/>
    <property type="chains" value="I/J/K/L/M/N=161-168"/>
</dbReference>
<dbReference type="PDB" id="6S9K">
    <property type="method" value="X-ray"/>
    <property type="resolution" value="1.60 A"/>
    <property type="chains" value="B=135-168"/>
</dbReference>
<dbReference type="PDB" id="6SAD">
    <property type="method" value="X-ray"/>
    <property type="resolution" value="2.75 A"/>
    <property type="chains" value="C=135-168"/>
</dbReference>
<dbReference type="PDB" id="6Y8B">
    <property type="method" value="X-ray"/>
    <property type="resolution" value="1.54 A"/>
    <property type="chains" value="P=136-143"/>
</dbReference>
<dbReference type="PDB" id="6Y8D">
    <property type="method" value="X-ray"/>
    <property type="resolution" value="1.51 A"/>
    <property type="chains" value="B=161-168"/>
</dbReference>
<dbReference type="PDBsum" id="1PYO"/>
<dbReference type="PDBsum" id="2P2C"/>
<dbReference type="PDBsum" id="3R5J"/>
<dbReference type="PDBsum" id="3R6G"/>
<dbReference type="PDBsum" id="3R6L"/>
<dbReference type="PDBsum" id="3R7B"/>
<dbReference type="PDBsum" id="3R7N"/>
<dbReference type="PDBsum" id="3R7S"/>
<dbReference type="PDBsum" id="3RJM"/>
<dbReference type="PDBsum" id="6GKF"/>
<dbReference type="PDBsum" id="6GKG"/>
<dbReference type="PDBsum" id="6S9K"/>
<dbReference type="PDBsum" id="6SAD"/>
<dbReference type="PDBsum" id="6Y8B"/>
<dbReference type="PDBsum" id="6Y8D"/>
<dbReference type="SMR" id="P42575"/>
<dbReference type="BioGRID" id="107285">
    <property type="interactions" value="60"/>
</dbReference>
<dbReference type="ComplexPortal" id="CPX-3905">
    <property type="entry name" value="Caspase-2 PIDDosome"/>
</dbReference>
<dbReference type="ComplexPortal" id="CPX-969">
    <property type="entry name" value="Caspase-2 complex"/>
</dbReference>
<dbReference type="CORUM" id="P42575"/>
<dbReference type="FunCoup" id="P42575">
    <property type="interactions" value="3074"/>
</dbReference>
<dbReference type="IntAct" id="P42575">
    <property type="interactions" value="18"/>
</dbReference>
<dbReference type="MINT" id="P42575"/>
<dbReference type="STRING" id="9606.ENSP00000312664"/>
<dbReference type="BindingDB" id="P42575"/>
<dbReference type="ChEMBL" id="CHEMBL4884"/>
<dbReference type="DrugCentral" id="P42575"/>
<dbReference type="GuidetoPHARMACOLOGY" id="1618"/>
<dbReference type="MEROPS" id="C14.006"/>
<dbReference type="iPTMnet" id="P42575"/>
<dbReference type="PhosphoSitePlus" id="P42575"/>
<dbReference type="BioMuta" id="CASP2"/>
<dbReference type="DMDM" id="83300977"/>
<dbReference type="jPOST" id="P42575"/>
<dbReference type="MassIVE" id="P42575"/>
<dbReference type="PaxDb" id="9606-ENSP00000312664"/>
<dbReference type="PeptideAtlas" id="P42575"/>
<dbReference type="ProteomicsDB" id="19708"/>
<dbReference type="ProteomicsDB" id="55519">
    <molecule id="P42575-1"/>
</dbReference>
<dbReference type="ProteomicsDB" id="55520">
    <molecule id="P42575-2"/>
</dbReference>
<dbReference type="Pumba" id="P42575"/>
<dbReference type="ABCD" id="P42575">
    <property type="antibodies" value="1 sequenced antibody"/>
</dbReference>
<dbReference type="Antibodypedia" id="3198">
    <property type="antibodies" value="800 antibodies from 42 providers"/>
</dbReference>
<dbReference type="DNASU" id="835"/>
<dbReference type="Ensembl" id="ENST00000310447.10">
    <molecule id="P42575-1"/>
    <property type="protein sequence ID" value="ENSP00000312664.5"/>
    <property type="gene ID" value="ENSG00000106144.20"/>
</dbReference>
<dbReference type="GeneID" id="835"/>
<dbReference type="KEGG" id="hsa:835"/>
<dbReference type="MANE-Select" id="ENST00000310447.10">
    <property type="protein sequence ID" value="ENSP00000312664.5"/>
    <property type="RefSeq nucleotide sequence ID" value="NM_032982.4"/>
    <property type="RefSeq protein sequence ID" value="NP_116764.2"/>
</dbReference>
<dbReference type="UCSC" id="uc003wco.3">
    <molecule id="P42575-1"/>
    <property type="organism name" value="human"/>
</dbReference>
<dbReference type="AGR" id="HGNC:1503"/>
<dbReference type="CTD" id="835"/>
<dbReference type="DisGeNET" id="835"/>
<dbReference type="GeneCards" id="CASP2"/>
<dbReference type="HGNC" id="HGNC:1503">
    <property type="gene designation" value="CASP2"/>
</dbReference>
<dbReference type="HPA" id="ENSG00000106144">
    <property type="expression patterns" value="Low tissue specificity"/>
</dbReference>
<dbReference type="MalaCards" id="CASP2"/>
<dbReference type="MIM" id="600639">
    <property type="type" value="gene"/>
</dbReference>
<dbReference type="MIM" id="620653">
    <property type="type" value="phenotype"/>
</dbReference>
<dbReference type="neXtProt" id="NX_P42575"/>
<dbReference type="OpenTargets" id="ENSG00000106144"/>
<dbReference type="PharmGKB" id="PA26086"/>
<dbReference type="VEuPathDB" id="HostDB:ENSG00000106144"/>
<dbReference type="eggNOG" id="KOG3573">
    <property type="taxonomic scope" value="Eukaryota"/>
</dbReference>
<dbReference type="GeneTree" id="ENSGT00940000156657"/>
<dbReference type="HOGENOM" id="CLU_036904_5_2_1"/>
<dbReference type="InParanoid" id="P42575"/>
<dbReference type="OMA" id="VCYANTP"/>
<dbReference type="OrthoDB" id="10004338at2759"/>
<dbReference type="PAN-GO" id="P42575">
    <property type="GO annotations" value="7 GO annotations based on evolutionary models"/>
</dbReference>
<dbReference type="PhylomeDB" id="P42575"/>
<dbReference type="TreeFam" id="TF102023"/>
<dbReference type="BioCyc" id="MetaCyc:HS02869-MONOMER"/>
<dbReference type="BRENDA" id="3.4.22.55">
    <property type="organism ID" value="2681"/>
</dbReference>
<dbReference type="PathwayCommons" id="P42575"/>
<dbReference type="Reactome" id="R-HSA-168638">
    <property type="pathway name" value="NOD1/2 Signaling Pathway"/>
</dbReference>
<dbReference type="Reactome" id="R-HSA-205025">
    <property type="pathway name" value="NADE modulates death signalling"/>
</dbReference>
<dbReference type="Reactome" id="R-HSA-6803207">
    <property type="pathway name" value="TP53 Regulates Transcription of Caspase Activators and Caspases"/>
</dbReference>
<dbReference type="SignaLink" id="P42575"/>
<dbReference type="SIGNOR" id="P42575"/>
<dbReference type="BioGRID-ORCS" id="835">
    <property type="hits" value="14 hits in 1174 CRISPR screens"/>
</dbReference>
<dbReference type="ChiTaRS" id="CASP2">
    <property type="organism name" value="human"/>
</dbReference>
<dbReference type="EvolutionaryTrace" id="P42575"/>
<dbReference type="GeneWiki" id="Caspase_2"/>
<dbReference type="GenomeRNAi" id="835"/>
<dbReference type="Pharos" id="P42575">
    <property type="development level" value="Tchem"/>
</dbReference>
<dbReference type="PRO" id="PR:P42575"/>
<dbReference type="Proteomes" id="UP000005640">
    <property type="component" value="Chromosome 7"/>
</dbReference>
<dbReference type="RNAct" id="P42575">
    <property type="molecule type" value="protein"/>
</dbReference>
<dbReference type="Bgee" id="ENSG00000106144">
    <property type="expression patterns" value="Expressed in buccal mucosa cell and 181 other cell types or tissues"/>
</dbReference>
<dbReference type="ExpressionAtlas" id="P42575">
    <property type="expression patterns" value="baseline and differential"/>
</dbReference>
<dbReference type="GO" id="GO:0005737">
    <property type="term" value="C:cytoplasm"/>
    <property type="evidence" value="ECO:0000318"/>
    <property type="project" value="GO_Central"/>
</dbReference>
<dbReference type="GO" id="GO:0005829">
    <property type="term" value="C:cytosol"/>
    <property type="evidence" value="ECO:0000304"/>
    <property type="project" value="Reactome"/>
</dbReference>
<dbReference type="GO" id="GO:1905369">
    <property type="term" value="C:endopeptidase complex"/>
    <property type="evidence" value="ECO:0000353"/>
    <property type="project" value="ComplexPortal"/>
</dbReference>
<dbReference type="GO" id="GO:0005730">
    <property type="term" value="C:nucleolus"/>
    <property type="evidence" value="ECO:0000303"/>
    <property type="project" value="ComplexPortal"/>
</dbReference>
<dbReference type="GO" id="GO:0005634">
    <property type="term" value="C:nucleus"/>
    <property type="evidence" value="ECO:0000304"/>
    <property type="project" value="UniProtKB"/>
</dbReference>
<dbReference type="GO" id="GO:0004197">
    <property type="term" value="F:cysteine-type endopeptidase activity"/>
    <property type="evidence" value="ECO:0000314"/>
    <property type="project" value="UniProtKB"/>
</dbReference>
<dbReference type="GO" id="GO:0019899">
    <property type="term" value="F:enzyme binding"/>
    <property type="evidence" value="ECO:0000250"/>
    <property type="project" value="UniProtKB"/>
</dbReference>
<dbReference type="GO" id="GO:0042802">
    <property type="term" value="F:identical protein binding"/>
    <property type="evidence" value="ECO:0000353"/>
    <property type="project" value="IntAct"/>
</dbReference>
<dbReference type="GO" id="GO:0019904">
    <property type="term" value="F:protein domain specific binding"/>
    <property type="evidence" value="ECO:0000353"/>
    <property type="project" value="BHF-UCL"/>
</dbReference>
<dbReference type="GO" id="GO:0006915">
    <property type="term" value="P:apoptotic process"/>
    <property type="evidence" value="ECO:0000318"/>
    <property type="project" value="GO_Central"/>
</dbReference>
<dbReference type="GO" id="GO:0097190">
    <property type="term" value="P:apoptotic signaling pathway"/>
    <property type="evidence" value="ECO:0000304"/>
    <property type="project" value="UniProtKB"/>
</dbReference>
<dbReference type="GO" id="GO:0071260">
    <property type="term" value="P:cellular response to mechanical stimulus"/>
    <property type="evidence" value="ECO:0000270"/>
    <property type="project" value="UniProtKB"/>
</dbReference>
<dbReference type="GO" id="GO:0006974">
    <property type="term" value="P:DNA damage response"/>
    <property type="evidence" value="ECO:0000303"/>
    <property type="project" value="ComplexPortal"/>
</dbReference>
<dbReference type="GO" id="GO:0030330">
    <property type="term" value="P:DNA damage response, signal transduction by p53 class mediator"/>
    <property type="evidence" value="ECO:0000315"/>
    <property type="project" value="UniProtKB"/>
</dbReference>
<dbReference type="GO" id="GO:0035234">
    <property type="term" value="P:ectopic germ cell programmed cell death"/>
    <property type="evidence" value="ECO:0007669"/>
    <property type="project" value="Ensembl"/>
</dbReference>
<dbReference type="GO" id="GO:0097194">
    <property type="term" value="P:execution phase of apoptosis"/>
    <property type="evidence" value="ECO:0000304"/>
    <property type="project" value="UniProtKB"/>
</dbReference>
<dbReference type="GO" id="GO:0097192">
    <property type="term" value="P:extrinsic apoptotic signaling pathway in absence of ligand"/>
    <property type="evidence" value="ECO:0000318"/>
    <property type="project" value="GO_Central"/>
</dbReference>
<dbReference type="GO" id="GO:0008630">
    <property type="term" value="P:intrinsic apoptotic signaling pathway in response to DNA damage"/>
    <property type="evidence" value="ECO:0000318"/>
    <property type="project" value="GO_Central"/>
</dbReference>
<dbReference type="GO" id="GO:0001554">
    <property type="term" value="P:luteolysis"/>
    <property type="evidence" value="ECO:0007669"/>
    <property type="project" value="Ensembl"/>
</dbReference>
<dbReference type="GO" id="GO:0043066">
    <property type="term" value="P:negative regulation of apoptotic process"/>
    <property type="evidence" value="ECO:0000303"/>
    <property type="project" value="UniProtKB"/>
</dbReference>
<dbReference type="GO" id="GO:0003407">
    <property type="term" value="P:neural retina development"/>
    <property type="evidence" value="ECO:0007669"/>
    <property type="project" value="Ensembl"/>
</dbReference>
<dbReference type="GO" id="GO:0043065">
    <property type="term" value="P:positive regulation of apoptotic process"/>
    <property type="evidence" value="ECO:0000314"/>
    <property type="project" value="UniProtKB"/>
</dbReference>
<dbReference type="GO" id="GO:2001235">
    <property type="term" value="P:positive regulation of apoptotic signaling pathway"/>
    <property type="evidence" value="ECO:0007669"/>
    <property type="project" value="Ensembl"/>
</dbReference>
<dbReference type="GO" id="GO:0043525">
    <property type="term" value="P:positive regulation of neuron apoptotic process"/>
    <property type="evidence" value="ECO:0000318"/>
    <property type="project" value="GO_Central"/>
</dbReference>
<dbReference type="GO" id="GO:0016485">
    <property type="term" value="P:protein processing"/>
    <property type="evidence" value="ECO:0000314"/>
    <property type="project" value="BHF-UCL"/>
</dbReference>
<dbReference type="CDD" id="cd08332">
    <property type="entry name" value="CARD_CASP2"/>
    <property type="match status" value="1"/>
</dbReference>
<dbReference type="CDD" id="cd00032">
    <property type="entry name" value="CASc"/>
    <property type="match status" value="1"/>
</dbReference>
<dbReference type="FunFam" id="3.40.50.1460:FF:000009">
    <property type="entry name" value="Caspase 2"/>
    <property type="match status" value="1"/>
</dbReference>
<dbReference type="FunFam" id="1.10.533.10:FF:000024">
    <property type="entry name" value="caspase-2 isoform X1"/>
    <property type="match status" value="1"/>
</dbReference>
<dbReference type="FunFam" id="3.30.70.1470:FF:000001">
    <property type="entry name" value="Putative caspase-2"/>
    <property type="match status" value="1"/>
</dbReference>
<dbReference type="Gene3D" id="3.40.50.1460">
    <property type="match status" value="1"/>
</dbReference>
<dbReference type="Gene3D" id="3.30.70.1470">
    <property type="entry name" value="Caspase-like"/>
    <property type="match status" value="1"/>
</dbReference>
<dbReference type="Gene3D" id="1.10.533.10">
    <property type="entry name" value="Death Domain, Fas"/>
    <property type="match status" value="1"/>
</dbReference>
<dbReference type="InterPro" id="IPR001315">
    <property type="entry name" value="CARD"/>
</dbReference>
<dbReference type="InterPro" id="IPR035702">
    <property type="entry name" value="CASP2_CARD"/>
</dbReference>
<dbReference type="InterPro" id="IPR029030">
    <property type="entry name" value="Caspase-like_dom_sf"/>
</dbReference>
<dbReference type="InterPro" id="IPR033139">
    <property type="entry name" value="Caspase_cys_AS"/>
</dbReference>
<dbReference type="InterPro" id="IPR016129">
    <property type="entry name" value="Caspase_his_AS"/>
</dbReference>
<dbReference type="InterPro" id="IPR011029">
    <property type="entry name" value="DEATH-like_dom_sf"/>
</dbReference>
<dbReference type="InterPro" id="IPR002398">
    <property type="entry name" value="Pept_C14"/>
</dbReference>
<dbReference type="InterPro" id="IPR011600">
    <property type="entry name" value="Pept_C14_caspase"/>
</dbReference>
<dbReference type="InterPro" id="IPR002138">
    <property type="entry name" value="Pept_C14_p10"/>
</dbReference>
<dbReference type="InterPro" id="IPR001309">
    <property type="entry name" value="Pept_C14_p20"/>
</dbReference>
<dbReference type="InterPro" id="IPR015917">
    <property type="entry name" value="Pept_C14A"/>
</dbReference>
<dbReference type="PANTHER" id="PTHR47901:SF7">
    <property type="entry name" value="CASPASE 2"/>
    <property type="match status" value="1"/>
</dbReference>
<dbReference type="PANTHER" id="PTHR47901">
    <property type="entry name" value="CASPASE RECRUITMENT DOMAIN-CONTAINING PROTEIN 18"/>
    <property type="match status" value="1"/>
</dbReference>
<dbReference type="Pfam" id="PF00619">
    <property type="entry name" value="CARD"/>
    <property type="match status" value="1"/>
</dbReference>
<dbReference type="Pfam" id="PF00656">
    <property type="entry name" value="Peptidase_C14"/>
    <property type="match status" value="1"/>
</dbReference>
<dbReference type="PIRSF" id="PIRSF038001">
    <property type="entry name" value="Caspase_ICE"/>
    <property type="match status" value="1"/>
</dbReference>
<dbReference type="PRINTS" id="PR00376">
    <property type="entry name" value="IL1BCENZYME"/>
</dbReference>
<dbReference type="SMART" id="SM00114">
    <property type="entry name" value="CARD"/>
    <property type="match status" value="1"/>
</dbReference>
<dbReference type="SMART" id="SM00115">
    <property type="entry name" value="CASc"/>
    <property type="match status" value="1"/>
</dbReference>
<dbReference type="SUPFAM" id="SSF52129">
    <property type="entry name" value="Caspase-like"/>
    <property type="match status" value="1"/>
</dbReference>
<dbReference type="SUPFAM" id="SSF47986">
    <property type="entry name" value="DEATH domain"/>
    <property type="match status" value="1"/>
</dbReference>
<dbReference type="PROSITE" id="PS50209">
    <property type="entry name" value="CARD"/>
    <property type="match status" value="1"/>
</dbReference>
<dbReference type="PROSITE" id="PS01122">
    <property type="entry name" value="CASPASE_CYS"/>
    <property type="match status" value="1"/>
</dbReference>
<dbReference type="PROSITE" id="PS01121">
    <property type="entry name" value="CASPASE_HIS"/>
    <property type="match status" value="1"/>
</dbReference>
<dbReference type="PROSITE" id="PS50207">
    <property type="entry name" value="CASPASE_P10"/>
    <property type="match status" value="1"/>
</dbReference>
<dbReference type="PROSITE" id="PS50208">
    <property type="entry name" value="CASPASE_P20"/>
    <property type="match status" value="1"/>
</dbReference>